<dbReference type="EC" id="2.7.1.144" evidence="1"/>
<dbReference type="EMBL" id="AE009949">
    <property type="protein sequence ID" value="AAL98474.1"/>
    <property type="molecule type" value="Genomic_DNA"/>
</dbReference>
<dbReference type="RefSeq" id="WP_002982751.1">
    <property type="nucleotide sequence ID" value="NC_003485.1"/>
</dbReference>
<dbReference type="SMR" id="Q8NZD9"/>
<dbReference type="KEGG" id="spm:spyM18_1989"/>
<dbReference type="HOGENOM" id="CLU_050013_5_0_9"/>
<dbReference type="UniPathway" id="UPA00704">
    <property type="reaction ID" value="UER00715"/>
</dbReference>
<dbReference type="GO" id="GO:0005829">
    <property type="term" value="C:cytosol"/>
    <property type="evidence" value="ECO:0007669"/>
    <property type="project" value="TreeGrafter"/>
</dbReference>
<dbReference type="GO" id="GO:0005524">
    <property type="term" value="F:ATP binding"/>
    <property type="evidence" value="ECO:0007669"/>
    <property type="project" value="UniProtKB-KW"/>
</dbReference>
<dbReference type="GO" id="GO:0008443">
    <property type="term" value="F:phosphofructokinase activity"/>
    <property type="evidence" value="ECO:0007669"/>
    <property type="project" value="TreeGrafter"/>
</dbReference>
<dbReference type="GO" id="GO:0009024">
    <property type="term" value="F:tagatose-6-phosphate kinase activity"/>
    <property type="evidence" value="ECO:0007669"/>
    <property type="project" value="UniProtKB-UniRule"/>
</dbReference>
<dbReference type="GO" id="GO:2001059">
    <property type="term" value="P:D-tagatose 6-phosphate catabolic process"/>
    <property type="evidence" value="ECO:0007669"/>
    <property type="project" value="UniProtKB-UniRule"/>
</dbReference>
<dbReference type="GO" id="GO:0019512">
    <property type="term" value="P:lactose catabolic process via tagatose-6-phosphate"/>
    <property type="evidence" value="ECO:0007669"/>
    <property type="project" value="InterPro"/>
</dbReference>
<dbReference type="CDD" id="cd01164">
    <property type="entry name" value="FruK_PfkB_like"/>
    <property type="match status" value="1"/>
</dbReference>
<dbReference type="FunFam" id="3.40.1190.20:FF:000001">
    <property type="entry name" value="Phosphofructokinase"/>
    <property type="match status" value="1"/>
</dbReference>
<dbReference type="Gene3D" id="3.40.1190.20">
    <property type="match status" value="1"/>
</dbReference>
<dbReference type="HAMAP" id="MF_01557">
    <property type="entry name" value="LacC"/>
    <property type="match status" value="1"/>
</dbReference>
<dbReference type="InterPro" id="IPR005926">
    <property type="entry name" value="LacC"/>
</dbReference>
<dbReference type="InterPro" id="IPR011611">
    <property type="entry name" value="PfkB_dom"/>
</dbReference>
<dbReference type="InterPro" id="IPR029056">
    <property type="entry name" value="Ribokinase-like"/>
</dbReference>
<dbReference type="InterPro" id="IPR017583">
    <property type="entry name" value="Tagatose/fructose_Pkinase"/>
</dbReference>
<dbReference type="NCBIfam" id="TIGR03168">
    <property type="entry name" value="1-PFK"/>
    <property type="match status" value="1"/>
</dbReference>
<dbReference type="NCBIfam" id="TIGR01231">
    <property type="entry name" value="lacC"/>
    <property type="match status" value="1"/>
</dbReference>
<dbReference type="NCBIfam" id="NF010033">
    <property type="entry name" value="PRK13508.1"/>
    <property type="match status" value="1"/>
</dbReference>
<dbReference type="PANTHER" id="PTHR46566:SF5">
    <property type="entry name" value="1-PHOSPHOFRUCTOKINASE"/>
    <property type="match status" value="1"/>
</dbReference>
<dbReference type="PANTHER" id="PTHR46566">
    <property type="entry name" value="1-PHOSPHOFRUCTOKINASE-RELATED"/>
    <property type="match status" value="1"/>
</dbReference>
<dbReference type="Pfam" id="PF00294">
    <property type="entry name" value="PfkB"/>
    <property type="match status" value="1"/>
</dbReference>
<dbReference type="PIRSF" id="PIRSF000535">
    <property type="entry name" value="1PFK/6PFK/LacC"/>
    <property type="match status" value="1"/>
</dbReference>
<dbReference type="SUPFAM" id="SSF53613">
    <property type="entry name" value="Ribokinase-like"/>
    <property type="match status" value="1"/>
</dbReference>
<proteinExistence type="inferred from homology"/>
<evidence type="ECO:0000255" key="1">
    <source>
        <dbReference type="HAMAP-Rule" id="MF_01557"/>
    </source>
</evidence>
<feature type="chain" id="PRO_0000203934" description="Tagatose-6-phosphate kinase">
    <location>
        <begin position="1"/>
        <end position="309"/>
    </location>
</feature>
<accession>Q8NZD9</accession>
<organism>
    <name type="scientific">Streptococcus pyogenes serotype M18 (strain MGAS8232)</name>
    <dbReference type="NCBI Taxonomy" id="186103"/>
    <lineage>
        <taxon>Bacteria</taxon>
        <taxon>Bacillati</taxon>
        <taxon>Bacillota</taxon>
        <taxon>Bacilli</taxon>
        <taxon>Lactobacillales</taxon>
        <taxon>Streptococcaceae</taxon>
        <taxon>Streptococcus</taxon>
    </lineage>
</organism>
<reference key="1">
    <citation type="journal article" date="2002" name="Proc. Natl. Acad. Sci. U.S.A.">
        <title>Genome sequence and comparative microarray analysis of serotype M18 group A Streptococcus strains associated with acute rheumatic fever outbreaks.</title>
        <authorList>
            <person name="Smoot J.C."/>
            <person name="Barbian K.D."/>
            <person name="Van Gompel J.J."/>
            <person name="Smoot L.M."/>
            <person name="Chaussee M.S."/>
            <person name="Sylva G.L."/>
            <person name="Sturdevant D.E."/>
            <person name="Ricklefs S.M."/>
            <person name="Porcella S.F."/>
            <person name="Parkins L.D."/>
            <person name="Beres S.B."/>
            <person name="Campbell D.S."/>
            <person name="Smith T.M."/>
            <person name="Zhang Q."/>
            <person name="Kapur V."/>
            <person name="Daly J.A."/>
            <person name="Veasy L.G."/>
            <person name="Musser J.M."/>
        </authorList>
    </citation>
    <scope>NUCLEOTIDE SEQUENCE [LARGE SCALE GENOMIC DNA]</scope>
    <source>
        <strain>MGAS8232</strain>
    </source>
</reference>
<protein>
    <recommendedName>
        <fullName evidence="1">Tagatose-6-phosphate kinase</fullName>
        <ecNumber evidence="1">2.7.1.144</ecNumber>
    </recommendedName>
    <alternativeName>
        <fullName evidence="1">Phosphotagatokinase</fullName>
    </alternativeName>
</protein>
<comment type="catalytic activity">
    <reaction evidence="1">
        <text>D-tagatofuranose 6-phosphate + ATP = D-tagatofuranose 1,6-bisphosphate + ADP + H(+)</text>
        <dbReference type="Rhea" id="RHEA:12420"/>
        <dbReference type="ChEBI" id="CHEBI:15378"/>
        <dbReference type="ChEBI" id="CHEBI:30616"/>
        <dbReference type="ChEBI" id="CHEBI:58694"/>
        <dbReference type="ChEBI" id="CHEBI:58695"/>
        <dbReference type="ChEBI" id="CHEBI:456216"/>
        <dbReference type="EC" id="2.7.1.144"/>
    </reaction>
</comment>
<comment type="pathway">
    <text evidence="1">Carbohydrate metabolism; D-tagatose 6-phosphate degradation; D-glyceraldehyde 3-phosphate and glycerone phosphate from D-tagatose 6-phosphate: step 1/2.</text>
</comment>
<comment type="similarity">
    <text evidence="1">Belongs to the carbohydrate kinase PfkB family. LacC subfamily.</text>
</comment>
<name>LACC_STRP8</name>
<gene>
    <name evidence="1" type="primary">lacC</name>
    <name type="ordered locus">spyM18_1989</name>
</gene>
<keyword id="KW-0067">ATP-binding</keyword>
<keyword id="KW-0418">Kinase</keyword>
<keyword id="KW-0423">Lactose metabolism</keyword>
<keyword id="KW-0547">Nucleotide-binding</keyword>
<keyword id="KW-0808">Transferase</keyword>
<sequence>MILTVTLNPAIDVSYPLDELKCDTVNRVVDVTKTPGGKGLNVCRVLNDFGETVKATGCIGGESGDFIINHLPDSILSRFYKISGDTRTCIAILHEGNQTEILEKGPLLSVEEIDGFTHHFKYLLNDVDVVTLSGSLPAGMPDDYYQKLIGIANLNGKKTVLDCSGNALEAVLKGDSKPTVIKPNLEELSQLLGKEMTKDFEALKEVLQDELFEGIEWIIVSLGADGVFAKHNDTFYNVDIPKIEIVSAVGSGDSTVAGIASGLANDEDDRALLTKANVLGMLNAQEKTTGHVNMANYDKLYQSIKVKEV</sequence>